<gene>
    <name type="primary">BMT4</name>
    <name type="synonym">WRY1</name>
    <name type="ordered locus">CAALFM_C603250WA</name>
    <name type="ORF">CaO19.13055</name>
    <name type="ORF">CaO19.5612</name>
</gene>
<reference key="1">
    <citation type="journal article" date="2004" name="Proc. Natl. Acad. Sci. U.S.A.">
        <title>The diploid genome sequence of Candida albicans.</title>
        <authorList>
            <person name="Jones T."/>
            <person name="Federspiel N.A."/>
            <person name="Chibana H."/>
            <person name="Dungan J."/>
            <person name="Kalman S."/>
            <person name="Magee B.B."/>
            <person name="Newport G."/>
            <person name="Thorstenson Y.R."/>
            <person name="Agabian N."/>
            <person name="Magee P.T."/>
            <person name="Davis R.W."/>
            <person name="Scherer S."/>
        </authorList>
    </citation>
    <scope>NUCLEOTIDE SEQUENCE [LARGE SCALE GENOMIC DNA]</scope>
    <source>
        <strain>SC5314 / ATCC MYA-2876</strain>
    </source>
</reference>
<reference key="2">
    <citation type="journal article" date="2007" name="Genome Biol.">
        <title>Assembly of the Candida albicans genome into sixteen supercontigs aligned on the eight chromosomes.</title>
        <authorList>
            <person name="van het Hoog M."/>
            <person name="Rast T.J."/>
            <person name="Martchenko M."/>
            <person name="Grindle S."/>
            <person name="Dignard D."/>
            <person name="Hogues H."/>
            <person name="Cuomo C."/>
            <person name="Berriman M."/>
            <person name="Scherer S."/>
            <person name="Magee B.B."/>
            <person name="Whiteway M."/>
            <person name="Chibana H."/>
            <person name="Nantel A."/>
            <person name="Magee P.T."/>
        </authorList>
    </citation>
    <scope>GENOME REANNOTATION</scope>
    <source>
        <strain>SC5314 / ATCC MYA-2876</strain>
    </source>
</reference>
<reference key="3">
    <citation type="journal article" date="2013" name="Genome Biol.">
        <title>Assembly of a phased diploid Candida albicans genome facilitates allele-specific measurements and provides a simple model for repeat and indel structure.</title>
        <authorList>
            <person name="Muzzey D."/>
            <person name="Schwartz K."/>
            <person name="Weissman J.S."/>
            <person name="Sherlock G."/>
        </authorList>
    </citation>
    <scope>NUCLEOTIDE SEQUENCE [LARGE SCALE GENOMIC DNA]</scope>
    <scope>GENOME REANNOTATION</scope>
    <source>
        <strain>SC5314 / ATCC MYA-2876</strain>
    </source>
</reference>
<reference key="4">
    <citation type="journal article" date="2005" name="Mol. Microbiol.">
        <title>The moonlighting protein Tsa1p is implicated in oxidative stress response and in cell wall biogenesis in Candida albicans.</title>
        <authorList>
            <person name="Urban C."/>
            <person name="Xiong X."/>
            <person name="Sohn K."/>
            <person name="Schroppel K."/>
            <person name="Brunner H."/>
            <person name="Rupp S."/>
        </authorList>
    </citation>
    <scope>INDUCTION</scope>
</reference>
<reference key="5">
    <citation type="journal article" date="2008" name="J. Biol. Chem.">
        <title>Identification of a new family of genes involved in beta-1,2-mannosylation of glycans in Pichia pastoris and Candida albicans.</title>
        <authorList>
            <person name="Mille C."/>
            <person name="Bobrowicz P."/>
            <person name="Trinel P.A."/>
            <person name="Li H."/>
            <person name="Maes E."/>
            <person name="Guerardel Y."/>
            <person name="Fradin C."/>
            <person name="Martinez-Esparza M."/>
            <person name="Davidson R.C."/>
            <person name="Janbon G."/>
            <person name="Poulain D."/>
            <person name="Wildt S."/>
        </authorList>
    </citation>
    <scope>IDENTIFICATION</scope>
    <scope>DISRUPTION PHENOTYPE</scope>
    <scope>FUNCTION</scope>
</reference>
<reference key="6">
    <citation type="journal article" date="2011" name="Mol. Microbiol.">
        <title>Contribution of the glycolytic flux and hypoxia adaptation to efficient biofilm formation by Candida albicans.</title>
        <authorList>
            <person name="Bonhomme J."/>
            <person name="Chauvel M."/>
            <person name="Goyard S."/>
            <person name="Roux P."/>
            <person name="Rossignol T."/>
            <person name="d'Enfert C."/>
        </authorList>
    </citation>
    <scope>INDUCTION</scope>
</reference>
<evidence type="ECO:0000255" key="1"/>
<evidence type="ECO:0000256" key="2">
    <source>
        <dbReference type="SAM" id="MobiDB-lite"/>
    </source>
</evidence>
<evidence type="ECO:0000269" key="3">
    <source>
    </source>
</evidence>
<evidence type="ECO:0000269" key="4">
    <source>
    </source>
</evidence>
<evidence type="ECO:0000269" key="5">
    <source>
    </source>
</evidence>
<evidence type="ECO:0000305" key="6"/>
<keyword id="KW-0961">Cell wall biogenesis/degradation</keyword>
<keyword id="KW-0175">Coiled coil</keyword>
<keyword id="KW-0328">Glycosyltransferase</keyword>
<keyword id="KW-0472">Membrane</keyword>
<keyword id="KW-1185">Reference proteome</keyword>
<keyword id="KW-0735">Signal-anchor</keyword>
<keyword id="KW-0808">Transferase</keyword>
<keyword id="KW-0812">Transmembrane</keyword>
<keyword id="KW-1133">Transmembrane helix</keyword>
<comment type="function">
    <text evidence="4">Beta-mannosyltransferase involved in cell wall biosynthesis. Required for the elongation of beta-mannose chains on the acid-labile fraction of cell wall phosphopeptidomannan.</text>
</comment>
<comment type="subcellular location">
    <subcellularLocation>
        <location evidence="6">Membrane</location>
        <topology evidence="6">Single-pass type II membrane protein</topology>
    </subcellularLocation>
</comment>
<comment type="induction">
    <text evidence="3 5">Expression in regulated by TSA1 and repressed in rat catheter biofilm.</text>
</comment>
<comment type="disruption phenotype">
    <text evidence="4">Impairs the elongation of beta-mannose chains on the acid-labile fraction of cell wall phosphopeptidomannan.</text>
</comment>
<comment type="similarity">
    <text evidence="6">Belongs to the BMT family.</text>
</comment>
<protein>
    <recommendedName>
        <fullName>Beta-mannosyltransferase 4</fullName>
        <ecNumber>2.4.1.-</ecNumber>
    </recommendedName>
    <alternativeName>
        <fullName>WRY family protein 1</fullName>
    </alternativeName>
</protein>
<feature type="chain" id="PRO_0000426072" description="Beta-mannosyltransferase 4">
    <location>
        <begin position="1"/>
        <end position="781"/>
    </location>
</feature>
<feature type="topological domain" description="Cytoplasmic" evidence="1">
    <location>
        <begin position="1"/>
        <end position="17"/>
    </location>
</feature>
<feature type="transmembrane region" description="Helical" evidence="1">
    <location>
        <begin position="18"/>
        <end position="38"/>
    </location>
</feature>
<feature type="topological domain" description="Extracellular" evidence="1">
    <location>
        <begin position="39"/>
        <end position="781"/>
    </location>
</feature>
<feature type="region of interest" description="Disordered" evidence="2">
    <location>
        <begin position="663"/>
        <end position="781"/>
    </location>
</feature>
<feature type="coiled-coil region" evidence="1">
    <location>
        <begin position="640"/>
        <end position="733"/>
    </location>
</feature>
<feature type="compositionally biased region" description="Basic and acidic residues" evidence="2">
    <location>
        <begin position="663"/>
        <end position="728"/>
    </location>
</feature>
<feature type="compositionally biased region" description="Basic and acidic residues" evidence="2">
    <location>
        <begin position="736"/>
        <end position="750"/>
    </location>
</feature>
<feature type="compositionally biased region" description="Acidic residues" evidence="2">
    <location>
        <begin position="751"/>
        <end position="781"/>
    </location>
</feature>
<proteinExistence type="evidence at transcript level"/>
<organism>
    <name type="scientific">Candida albicans (strain SC5314 / ATCC MYA-2876)</name>
    <name type="common">Yeast</name>
    <dbReference type="NCBI Taxonomy" id="237561"/>
    <lineage>
        <taxon>Eukaryota</taxon>
        <taxon>Fungi</taxon>
        <taxon>Dikarya</taxon>
        <taxon>Ascomycota</taxon>
        <taxon>Saccharomycotina</taxon>
        <taxon>Pichiomycetes</taxon>
        <taxon>Debaryomycetaceae</taxon>
        <taxon>Candida/Lodderomyces clade</taxon>
        <taxon>Candida</taxon>
    </lineage>
</organism>
<accession>Q5ABT8</accession>
<accession>A0A1D8PQ41</accession>
<accession>Q5AC62</accession>
<dbReference type="EC" id="2.4.1.-"/>
<dbReference type="EMBL" id="CP017628">
    <property type="protein sequence ID" value="AOW30255.1"/>
    <property type="molecule type" value="Genomic_DNA"/>
</dbReference>
<dbReference type="RefSeq" id="XP_719173.2">
    <property type="nucleotide sequence ID" value="XM_714080.2"/>
</dbReference>
<dbReference type="SMR" id="Q5ABT8"/>
<dbReference type="STRING" id="237561.Q5ABT8"/>
<dbReference type="CAZy" id="GT91">
    <property type="family name" value="Glycosyltransferase Family 91"/>
</dbReference>
<dbReference type="GeneID" id="3639182"/>
<dbReference type="KEGG" id="cal:CAALFM_C603250WA"/>
<dbReference type="eggNOG" id="ENOG502QTZG">
    <property type="taxonomic scope" value="Eukaryota"/>
</dbReference>
<dbReference type="HOGENOM" id="CLU_013841_1_0_1"/>
<dbReference type="InParanoid" id="Q5ABT8"/>
<dbReference type="OrthoDB" id="3631276at2759"/>
<dbReference type="PRO" id="PR:Q5ABT8"/>
<dbReference type="Proteomes" id="UP000000559">
    <property type="component" value="Chromosome 6"/>
</dbReference>
<dbReference type="GO" id="GO:0016020">
    <property type="term" value="C:membrane"/>
    <property type="evidence" value="ECO:0007669"/>
    <property type="project" value="UniProtKB-SubCell"/>
</dbReference>
<dbReference type="GO" id="GO:0000030">
    <property type="term" value="F:mannosyltransferase activity"/>
    <property type="evidence" value="ECO:0007669"/>
    <property type="project" value="InterPro"/>
</dbReference>
<dbReference type="GO" id="GO:0071555">
    <property type="term" value="P:cell wall organization"/>
    <property type="evidence" value="ECO:0007669"/>
    <property type="project" value="UniProtKB-KW"/>
</dbReference>
<dbReference type="InterPro" id="IPR021988">
    <property type="entry name" value="BMT1"/>
</dbReference>
<dbReference type="Pfam" id="PF12141">
    <property type="entry name" value="BMT"/>
    <property type="match status" value="1"/>
</dbReference>
<sequence length="781" mass="90959">MTKSYMPLFRSPRQFKKIYFILIPLILAVIILHVFFDGFNKISEYSPTFISNRILNHQDQQQKSEKSSDVISSYFPSLAIYPKNFDNRVEFVNEPKNSKWIQYFGDSKTVLSNYITNQTYTNHSIGLYSSSTVRPPASSCKDILYERSFEITKYRTLHDDLYKLATTLLYQLENDPAFQDLSPFFNDRLPHIIMRGELHKHIYKFAGTSVWLEQHGVHLMLSRVIYSQQGKKNDPQLSLLYAQVYDENWNELNDIELIVPVINPNGERVYDSVKYPQFLAIPFYHNSEYIKSRWYGPEDTRLILTKNKFGDDEPVIIFNSYHRQIKDMSTEDDNNVHTKFEFYRSMFVGWLFQYQLGKLNTDGIQDSKFNNVTFNKVKELRIEGKERTSIEKNWTPFIDPDERNQISYYGNHNLGDNYVYIVYQWNHLKILKCELDNFIDSSHSTCTMFFKDVETTQEVGPVRGGTELWPIKIDNNNNNNNLNEDDLSTKQEPQQQRQLWIGFLRAHVKDCGCGGSMYRPNFLILEKLNSKFKLTYLSGSINFNVSVYGWANYDVVCAGHEANALIPNGISMFDQDDDYLTLSMSVADQDNTLVHIHGVKKLIYSLDHDWNGILKENKQIECVVNNANDFCKAYADEHYKLGDSEAAIKEVKQKAKEEAEKAKAEKEKAEKEKAEKEKAEKEKEEKEKEEKEEKEKAEKEKEEKEKAEKELAEKELAEQKDEDAKDEDKNEDEDDKEKNDESGLTEKSEVEENGENTNEGGEDDGDGDGEEEKEDDDDIEV</sequence>
<name>BMT4_CANAL</name>